<organism>
    <name type="scientific">Legionella pneumophila (strain Corby)</name>
    <dbReference type="NCBI Taxonomy" id="400673"/>
    <lineage>
        <taxon>Bacteria</taxon>
        <taxon>Pseudomonadati</taxon>
        <taxon>Pseudomonadota</taxon>
        <taxon>Gammaproteobacteria</taxon>
        <taxon>Legionellales</taxon>
        <taxon>Legionellaceae</taxon>
        <taxon>Legionella</taxon>
    </lineage>
</organism>
<protein>
    <recommendedName>
        <fullName evidence="1">NADH-quinone oxidoreductase subunit D</fullName>
        <ecNumber evidence="1">7.1.1.-</ecNumber>
    </recommendedName>
    <alternativeName>
        <fullName evidence="1">NADH dehydrogenase I subunit D</fullName>
    </alternativeName>
    <alternativeName>
        <fullName evidence="1">NDH-1 subunit D</fullName>
    </alternativeName>
</protein>
<sequence length="417" mass="48193">MIELKNYTLNFGPQHPAAHGVLRLVLELEGETIVRADPHIGLLHRATEKLAETKPYIQSIGYMDRLDYVSMMCNEHAYVMAIEKLLGIEPPLRAKYIRTMFDEVTRILNHLLWLGATALDIGAMTVFLYCFREREDLFDCYEAVSGARMHATYYRPGGVARDLPDTMPQYKPSRWHNEREIEKKNHNRQGSLLDFLWAFTERFPRCVDEYETLLTDNRIWKQRTVDIGIVSPENALQWGFTGPMLRGSGIAWDLRKKQSYAAYDRVDFDIPVGKTGDCYDRYLVRVEELRQSNRIIRQCIEWLRKHPGPVKVDDYKVTPPRRVVMKHDMEALIHHFKLFTEGFCLPRGEVYSSVEAPKGEFGIYMVSDGANKPYRLKIRAPGFAHLSSFDDMVRGHMLADGVAILASQDIVFGEIDR</sequence>
<accession>A5IHW0</accession>
<gene>
    <name evidence="1" type="primary">nuoD</name>
    <name type="ordered locus">LPC_3072</name>
</gene>
<evidence type="ECO:0000255" key="1">
    <source>
        <dbReference type="HAMAP-Rule" id="MF_01358"/>
    </source>
</evidence>
<name>NUOD_LEGPC</name>
<keyword id="KW-0997">Cell inner membrane</keyword>
<keyword id="KW-1003">Cell membrane</keyword>
<keyword id="KW-0472">Membrane</keyword>
<keyword id="KW-0520">NAD</keyword>
<keyword id="KW-0874">Quinone</keyword>
<keyword id="KW-1278">Translocase</keyword>
<keyword id="KW-0813">Transport</keyword>
<keyword id="KW-0830">Ubiquinone</keyword>
<reference key="1">
    <citation type="submission" date="2006-11" db="EMBL/GenBank/DDBJ databases">
        <title>Identification and characterization of a new conjugation/ type IVA secretion system (trb/tra) of L. pneumophila Corby localized on a mobile genomic island.</title>
        <authorList>
            <person name="Gloeckner G."/>
            <person name="Albert-Weissenberger C."/>
            <person name="Weinmann E."/>
            <person name="Jacobi S."/>
            <person name="Schunder E."/>
            <person name="Steinert M."/>
            <person name="Buchrieser C."/>
            <person name="Hacker J."/>
            <person name="Heuner K."/>
        </authorList>
    </citation>
    <scope>NUCLEOTIDE SEQUENCE [LARGE SCALE GENOMIC DNA]</scope>
    <source>
        <strain>Corby</strain>
    </source>
</reference>
<comment type="function">
    <text evidence="1">NDH-1 shuttles electrons from NADH, via FMN and iron-sulfur (Fe-S) centers, to quinones in the respiratory chain. The immediate electron acceptor for the enzyme in this species is believed to be ubiquinone. Couples the redox reaction to proton translocation (for every two electrons transferred, four hydrogen ions are translocated across the cytoplasmic membrane), and thus conserves the redox energy in a proton gradient.</text>
</comment>
<comment type="catalytic activity">
    <reaction evidence="1">
        <text>a quinone + NADH + 5 H(+)(in) = a quinol + NAD(+) + 4 H(+)(out)</text>
        <dbReference type="Rhea" id="RHEA:57888"/>
        <dbReference type="ChEBI" id="CHEBI:15378"/>
        <dbReference type="ChEBI" id="CHEBI:24646"/>
        <dbReference type="ChEBI" id="CHEBI:57540"/>
        <dbReference type="ChEBI" id="CHEBI:57945"/>
        <dbReference type="ChEBI" id="CHEBI:132124"/>
    </reaction>
</comment>
<comment type="subunit">
    <text evidence="1">NDH-1 is composed of 14 different subunits. Subunits NuoB, C, D, E, F, and G constitute the peripheral sector of the complex.</text>
</comment>
<comment type="subcellular location">
    <subcellularLocation>
        <location evidence="1">Cell inner membrane</location>
        <topology evidence="1">Peripheral membrane protein</topology>
        <orientation evidence="1">Cytoplasmic side</orientation>
    </subcellularLocation>
</comment>
<comment type="similarity">
    <text evidence="1">Belongs to the complex I 49 kDa subunit family.</text>
</comment>
<proteinExistence type="inferred from homology"/>
<feature type="chain" id="PRO_0000371885" description="NADH-quinone oxidoreductase subunit D">
    <location>
        <begin position="1"/>
        <end position="417"/>
    </location>
</feature>
<dbReference type="EC" id="7.1.1.-" evidence="1"/>
<dbReference type="EMBL" id="CP000675">
    <property type="protein sequence ID" value="ABQ56960.1"/>
    <property type="molecule type" value="Genomic_DNA"/>
</dbReference>
<dbReference type="RefSeq" id="WP_011947674.1">
    <property type="nucleotide sequence ID" value="NC_009494.2"/>
</dbReference>
<dbReference type="SMR" id="A5IHW0"/>
<dbReference type="KEGG" id="lpc:LPC_3072"/>
<dbReference type="HOGENOM" id="CLU_015134_1_1_6"/>
<dbReference type="GO" id="GO:0005886">
    <property type="term" value="C:plasma membrane"/>
    <property type="evidence" value="ECO:0007669"/>
    <property type="project" value="UniProtKB-SubCell"/>
</dbReference>
<dbReference type="GO" id="GO:0051287">
    <property type="term" value="F:NAD binding"/>
    <property type="evidence" value="ECO:0007669"/>
    <property type="project" value="InterPro"/>
</dbReference>
<dbReference type="GO" id="GO:0050136">
    <property type="term" value="F:NADH:ubiquinone reductase (non-electrogenic) activity"/>
    <property type="evidence" value="ECO:0007669"/>
    <property type="project" value="UniProtKB-UniRule"/>
</dbReference>
<dbReference type="GO" id="GO:0048038">
    <property type="term" value="F:quinone binding"/>
    <property type="evidence" value="ECO:0007669"/>
    <property type="project" value="UniProtKB-KW"/>
</dbReference>
<dbReference type="FunFam" id="1.10.645.10:FF:000005">
    <property type="entry name" value="NADH-quinone oxidoreductase subunit D"/>
    <property type="match status" value="1"/>
</dbReference>
<dbReference type="Gene3D" id="1.10.645.10">
    <property type="entry name" value="Cytochrome-c3 Hydrogenase, chain B"/>
    <property type="match status" value="1"/>
</dbReference>
<dbReference type="HAMAP" id="MF_01358">
    <property type="entry name" value="NDH1_NuoD"/>
    <property type="match status" value="1"/>
</dbReference>
<dbReference type="InterPro" id="IPR001135">
    <property type="entry name" value="NADH_Q_OxRdtase_suD"/>
</dbReference>
<dbReference type="InterPro" id="IPR014029">
    <property type="entry name" value="NADH_UbQ_OxRdtase_49kDa_CS"/>
</dbReference>
<dbReference type="InterPro" id="IPR022885">
    <property type="entry name" value="NDH1_su_D/H"/>
</dbReference>
<dbReference type="InterPro" id="IPR029014">
    <property type="entry name" value="NiFe-Hase_large"/>
</dbReference>
<dbReference type="NCBIfam" id="TIGR01962">
    <property type="entry name" value="NuoD"/>
    <property type="match status" value="1"/>
</dbReference>
<dbReference type="NCBIfam" id="NF004739">
    <property type="entry name" value="PRK06075.1"/>
    <property type="match status" value="1"/>
</dbReference>
<dbReference type="PANTHER" id="PTHR11993:SF10">
    <property type="entry name" value="NADH DEHYDROGENASE [UBIQUINONE] IRON-SULFUR PROTEIN 2, MITOCHONDRIAL"/>
    <property type="match status" value="1"/>
</dbReference>
<dbReference type="PANTHER" id="PTHR11993">
    <property type="entry name" value="NADH-UBIQUINONE OXIDOREDUCTASE 49 KDA SUBUNIT"/>
    <property type="match status" value="1"/>
</dbReference>
<dbReference type="Pfam" id="PF00346">
    <property type="entry name" value="Complex1_49kDa"/>
    <property type="match status" value="1"/>
</dbReference>
<dbReference type="SUPFAM" id="SSF56762">
    <property type="entry name" value="HydB/Nqo4-like"/>
    <property type="match status" value="1"/>
</dbReference>
<dbReference type="PROSITE" id="PS00535">
    <property type="entry name" value="COMPLEX1_49K"/>
    <property type="match status" value="1"/>
</dbReference>